<accession>P9WNV9</accession>
<accession>A7BJ09</accession>
<accession>F2GN42</accession>
<accession>O08380</accession>
<accession>P07881</accession>
<accession>P0A548</accession>
<organism>
    <name type="scientific">Mycobacterium tuberculosis (strain ATCC 25618 / H37Rv)</name>
    <dbReference type="NCBI Taxonomy" id="83332"/>
    <lineage>
        <taxon>Bacteria</taxon>
        <taxon>Bacillati</taxon>
        <taxon>Actinomycetota</taxon>
        <taxon>Actinomycetes</taxon>
        <taxon>Mycobacteriales</taxon>
        <taxon>Mycobacteriaceae</taxon>
        <taxon>Mycobacterium</taxon>
        <taxon>Mycobacterium tuberculosis complex</taxon>
    </lineage>
</organism>
<protein>
    <recommendedName>
        <fullName evidence="1">Chaperone protein DnaJ 1</fullName>
    </recommendedName>
</protein>
<feature type="chain" id="PRO_0000070835" description="Chaperone protein DnaJ 1">
    <location>
        <begin position="1"/>
        <end position="395"/>
    </location>
</feature>
<feature type="domain" description="J" evidence="1">
    <location>
        <begin position="10"/>
        <end position="75"/>
    </location>
</feature>
<feature type="repeat" description="CXXCXGXG motif">
    <location>
        <begin position="177"/>
        <end position="184"/>
    </location>
</feature>
<feature type="repeat" description="CXXCXGXG motif">
    <location>
        <begin position="194"/>
        <end position="201"/>
    </location>
</feature>
<feature type="repeat" description="CXXCXGXG motif">
    <location>
        <begin position="216"/>
        <end position="223"/>
    </location>
</feature>
<feature type="repeat" description="CXXCXGXG motif">
    <location>
        <begin position="230"/>
        <end position="237"/>
    </location>
</feature>
<feature type="zinc finger region" description="CR-type" evidence="1">
    <location>
        <begin position="164"/>
        <end position="242"/>
    </location>
</feature>
<feature type="binding site" evidence="1">
    <location>
        <position position="177"/>
    </location>
    <ligand>
        <name>Zn(2+)</name>
        <dbReference type="ChEBI" id="CHEBI:29105"/>
        <label>1</label>
    </ligand>
</feature>
<feature type="binding site" evidence="1">
    <location>
        <position position="180"/>
    </location>
    <ligand>
        <name>Zn(2+)</name>
        <dbReference type="ChEBI" id="CHEBI:29105"/>
        <label>1</label>
    </ligand>
</feature>
<feature type="binding site" evidence="1">
    <location>
        <position position="194"/>
    </location>
    <ligand>
        <name>Zn(2+)</name>
        <dbReference type="ChEBI" id="CHEBI:29105"/>
        <label>2</label>
    </ligand>
</feature>
<feature type="binding site" evidence="1">
    <location>
        <position position="197"/>
    </location>
    <ligand>
        <name>Zn(2+)</name>
        <dbReference type="ChEBI" id="CHEBI:29105"/>
        <label>2</label>
    </ligand>
</feature>
<feature type="binding site" evidence="1">
    <location>
        <position position="216"/>
    </location>
    <ligand>
        <name>Zn(2+)</name>
        <dbReference type="ChEBI" id="CHEBI:29105"/>
        <label>2</label>
    </ligand>
</feature>
<feature type="binding site" evidence="1">
    <location>
        <position position="219"/>
    </location>
    <ligand>
        <name>Zn(2+)</name>
        <dbReference type="ChEBI" id="CHEBI:29105"/>
        <label>2</label>
    </ligand>
</feature>
<feature type="binding site" evidence="1">
    <location>
        <position position="230"/>
    </location>
    <ligand>
        <name>Zn(2+)</name>
        <dbReference type="ChEBI" id="CHEBI:29105"/>
        <label>1</label>
    </ligand>
</feature>
<feature type="binding site" evidence="1">
    <location>
        <position position="233"/>
    </location>
    <ligand>
        <name>Zn(2+)</name>
        <dbReference type="ChEBI" id="CHEBI:29105"/>
        <label>1</label>
    </ligand>
</feature>
<feature type="sequence conflict" description="In Ref. 1 and 2." evidence="2" ref="1 2">
    <original>GVPKRSGGSGDLLVTVKVAVPPNLAGAAQEALEAYAAAERSSGFNPRAGWAGNR</original>
    <variation>VCPSAVGVAATYLSP</variation>
    <location>
        <begin position="342"/>
        <end position="395"/>
    </location>
</feature>
<name>DNAJ1_MYCTU</name>
<dbReference type="EMBL" id="X06422">
    <property type="protein sequence ID" value="CAA29731.1"/>
    <property type="molecule type" value="Genomic_DNA"/>
</dbReference>
<dbReference type="EMBL" id="X58406">
    <property type="protein sequence ID" value="CAA41308.1"/>
    <property type="molecule type" value="Genomic_DNA"/>
</dbReference>
<dbReference type="EMBL" id="AB292558">
    <property type="protein sequence ID" value="BAF74477.1"/>
    <property type="molecule type" value="Genomic_DNA"/>
</dbReference>
<dbReference type="EMBL" id="AL123456">
    <property type="protein sequence ID" value="CCP43082.1"/>
    <property type="molecule type" value="Genomic_DNA"/>
</dbReference>
<dbReference type="PIR" id="A70575">
    <property type="entry name" value="A70575"/>
</dbReference>
<dbReference type="RefSeq" id="YP_177719.1">
    <property type="nucleotide sequence ID" value="NC_000962.3"/>
</dbReference>
<dbReference type="SMR" id="P9WNV9"/>
<dbReference type="FunCoup" id="P9WNV9">
    <property type="interactions" value="6"/>
</dbReference>
<dbReference type="STRING" id="83332.Rv0352"/>
<dbReference type="PaxDb" id="83332-Rv0352"/>
<dbReference type="DNASU" id="886495"/>
<dbReference type="GeneID" id="886495"/>
<dbReference type="KEGG" id="mtu:Rv0352"/>
<dbReference type="KEGG" id="mtv:RVBD_0352"/>
<dbReference type="TubercuList" id="Rv0352"/>
<dbReference type="eggNOG" id="COG0484">
    <property type="taxonomic scope" value="Bacteria"/>
</dbReference>
<dbReference type="InParanoid" id="P9WNV9"/>
<dbReference type="OrthoDB" id="9779889at2"/>
<dbReference type="PhylomeDB" id="P9WNV9"/>
<dbReference type="Proteomes" id="UP000001584">
    <property type="component" value="Chromosome"/>
</dbReference>
<dbReference type="GO" id="GO:0005737">
    <property type="term" value="C:cytoplasm"/>
    <property type="evidence" value="ECO:0000318"/>
    <property type="project" value="GO_Central"/>
</dbReference>
<dbReference type="GO" id="GO:0009274">
    <property type="term" value="C:peptidoglycan-based cell wall"/>
    <property type="evidence" value="ECO:0007005"/>
    <property type="project" value="MTBBASE"/>
</dbReference>
<dbReference type="GO" id="GO:0005886">
    <property type="term" value="C:plasma membrane"/>
    <property type="evidence" value="ECO:0007005"/>
    <property type="project" value="MTBBASE"/>
</dbReference>
<dbReference type="GO" id="GO:0005524">
    <property type="term" value="F:ATP binding"/>
    <property type="evidence" value="ECO:0007669"/>
    <property type="project" value="InterPro"/>
</dbReference>
<dbReference type="GO" id="GO:0031072">
    <property type="term" value="F:heat shock protein binding"/>
    <property type="evidence" value="ECO:0007669"/>
    <property type="project" value="InterPro"/>
</dbReference>
<dbReference type="GO" id="GO:0051082">
    <property type="term" value="F:unfolded protein binding"/>
    <property type="evidence" value="ECO:0000318"/>
    <property type="project" value="GO_Central"/>
</dbReference>
<dbReference type="GO" id="GO:0008270">
    <property type="term" value="F:zinc ion binding"/>
    <property type="evidence" value="ECO:0007669"/>
    <property type="project" value="UniProtKB-UniRule"/>
</dbReference>
<dbReference type="GO" id="GO:0051085">
    <property type="term" value="P:chaperone cofactor-dependent protein refolding"/>
    <property type="evidence" value="ECO:0000318"/>
    <property type="project" value="GO_Central"/>
</dbReference>
<dbReference type="GO" id="GO:0061077">
    <property type="term" value="P:chaperone-mediated protein folding"/>
    <property type="evidence" value="ECO:0000314"/>
    <property type="project" value="UniProtKB"/>
</dbReference>
<dbReference type="GO" id="GO:0006260">
    <property type="term" value="P:DNA replication"/>
    <property type="evidence" value="ECO:0007669"/>
    <property type="project" value="UniProtKB-KW"/>
</dbReference>
<dbReference type="GO" id="GO:0042026">
    <property type="term" value="P:protein refolding"/>
    <property type="evidence" value="ECO:0000318"/>
    <property type="project" value="GO_Central"/>
</dbReference>
<dbReference type="GO" id="GO:0010468">
    <property type="term" value="P:regulation of gene expression"/>
    <property type="evidence" value="ECO:0000314"/>
    <property type="project" value="MTBBASE"/>
</dbReference>
<dbReference type="GO" id="GO:0009408">
    <property type="term" value="P:response to heat"/>
    <property type="evidence" value="ECO:0007669"/>
    <property type="project" value="InterPro"/>
</dbReference>
<dbReference type="CDD" id="cd06257">
    <property type="entry name" value="DnaJ"/>
    <property type="match status" value="1"/>
</dbReference>
<dbReference type="CDD" id="cd10747">
    <property type="entry name" value="DnaJ_C"/>
    <property type="match status" value="1"/>
</dbReference>
<dbReference type="CDD" id="cd10719">
    <property type="entry name" value="DnaJ_zf"/>
    <property type="match status" value="1"/>
</dbReference>
<dbReference type="FunFam" id="1.10.287.110:FF:000127">
    <property type="entry name" value="Chaperone protein DnaJ"/>
    <property type="match status" value="1"/>
</dbReference>
<dbReference type="FunFam" id="2.60.260.20:FF:000021">
    <property type="entry name" value="Chaperone protein DnaJ"/>
    <property type="match status" value="1"/>
</dbReference>
<dbReference type="FunFam" id="2.10.230.10:FF:000002">
    <property type="entry name" value="Molecular chaperone DnaJ"/>
    <property type="match status" value="1"/>
</dbReference>
<dbReference type="Gene3D" id="1.10.287.110">
    <property type="entry name" value="DnaJ domain"/>
    <property type="match status" value="1"/>
</dbReference>
<dbReference type="Gene3D" id="2.10.230.10">
    <property type="entry name" value="Heat shock protein DnaJ, cysteine-rich domain"/>
    <property type="match status" value="1"/>
</dbReference>
<dbReference type="Gene3D" id="2.60.260.20">
    <property type="entry name" value="Urease metallochaperone UreE, N-terminal domain"/>
    <property type="match status" value="2"/>
</dbReference>
<dbReference type="HAMAP" id="MF_01152">
    <property type="entry name" value="DnaJ"/>
    <property type="match status" value="1"/>
</dbReference>
<dbReference type="InterPro" id="IPR012724">
    <property type="entry name" value="DnaJ"/>
</dbReference>
<dbReference type="InterPro" id="IPR002939">
    <property type="entry name" value="DnaJ_C"/>
</dbReference>
<dbReference type="InterPro" id="IPR001623">
    <property type="entry name" value="DnaJ_domain"/>
</dbReference>
<dbReference type="InterPro" id="IPR018253">
    <property type="entry name" value="DnaJ_domain_CS"/>
</dbReference>
<dbReference type="InterPro" id="IPR008971">
    <property type="entry name" value="HSP40/DnaJ_pept-bd"/>
</dbReference>
<dbReference type="InterPro" id="IPR001305">
    <property type="entry name" value="HSP_DnaJ_Cys-rich_dom"/>
</dbReference>
<dbReference type="InterPro" id="IPR036410">
    <property type="entry name" value="HSP_DnaJ_Cys-rich_dom_sf"/>
</dbReference>
<dbReference type="InterPro" id="IPR036869">
    <property type="entry name" value="J_dom_sf"/>
</dbReference>
<dbReference type="NCBIfam" id="TIGR02349">
    <property type="entry name" value="DnaJ_bact"/>
    <property type="match status" value="1"/>
</dbReference>
<dbReference type="NCBIfam" id="NF008035">
    <property type="entry name" value="PRK10767.1"/>
    <property type="match status" value="1"/>
</dbReference>
<dbReference type="NCBIfam" id="NF010872">
    <property type="entry name" value="PRK14279.1"/>
    <property type="match status" value="1"/>
</dbReference>
<dbReference type="PANTHER" id="PTHR43096:SF54">
    <property type="entry name" value="CHAPERONE PROTEIN DNAJ 1"/>
    <property type="match status" value="1"/>
</dbReference>
<dbReference type="PANTHER" id="PTHR43096">
    <property type="entry name" value="DNAJ HOMOLOG 1, MITOCHONDRIAL-RELATED"/>
    <property type="match status" value="1"/>
</dbReference>
<dbReference type="Pfam" id="PF00226">
    <property type="entry name" value="DnaJ"/>
    <property type="match status" value="1"/>
</dbReference>
<dbReference type="Pfam" id="PF01556">
    <property type="entry name" value="DnaJ_C"/>
    <property type="match status" value="1"/>
</dbReference>
<dbReference type="Pfam" id="PF00684">
    <property type="entry name" value="DnaJ_CXXCXGXG"/>
    <property type="match status" value="1"/>
</dbReference>
<dbReference type="PRINTS" id="PR00625">
    <property type="entry name" value="JDOMAIN"/>
</dbReference>
<dbReference type="SMART" id="SM00271">
    <property type="entry name" value="DnaJ"/>
    <property type="match status" value="1"/>
</dbReference>
<dbReference type="SUPFAM" id="SSF46565">
    <property type="entry name" value="Chaperone J-domain"/>
    <property type="match status" value="1"/>
</dbReference>
<dbReference type="SUPFAM" id="SSF57938">
    <property type="entry name" value="DnaJ/Hsp40 cysteine-rich domain"/>
    <property type="match status" value="1"/>
</dbReference>
<dbReference type="SUPFAM" id="SSF49493">
    <property type="entry name" value="HSP40/DnaJ peptide-binding domain"/>
    <property type="match status" value="2"/>
</dbReference>
<dbReference type="PROSITE" id="PS00636">
    <property type="entry name" value="DNAJ_1"/>
    <property type="match status" value="1"/>
</dbReference>
<dbReference type="PROSITE" id="PS50076">
    <property type="entry name" value="DNAJ_2"/>
    <property type="match status" value="1"/>
</dbReference>
<dbReference type="PROSITE" id="PS51188">
    <property type="entry name" value="ZF_CR"/>
    <property type="match status" value="1"/>
</dbReference>
<keyword id="KW-0143">Chaperone</keyword>
<keyword id="KW-0963">Cytoplasm</keyword>
<keyword id="KW-0235">DNA replication</keyword>
<keyword id="KW-0479">Metal-binding</keyword>
<keyword id="KW-1185">Reference proteome</keyword>
<keyword id="KW-0677">Repeat</keyword>
<keyword id="KW-0346">Stress response</keyword>
<keyword id="KW-0862">Zinc</keyword>
<keyword id="KW-0863">Zinc-finger</keyword>
<gene>
    <name evidence="1" type="primary">dnaJ1</name>
    <name type="ordered locus">Rv0352</name>
    <name type="ORF">MTCY13E10.12</name>
</gene>
<proteinExistence type="evidence at protein level"/>
<evidence type="ECO:0000255" key="1">
    <source>
        <dbReference type="HAMAP-Rule" id="MF_01152"/>
    </source>
</evidence>
<evidence type="ECO:0000305" key="2"/>
<comment type="function">
    <text evidence="1">Participates actively in the response to hyperosmotic and heat shock by preventing the aggregation of stress-denatured proteins and by disaggregating proteins, also in an autonomous, DnaK-independent fashion. Unfolded proteins bind initially to DnaJ; upon interaction with the DnaJ-bound protein, DnaK hydrolyzes its bound ATP, resulting in the formation of a stable complex. GrpE releases ADP from DnaK; ATP binding to DnaK triggers the release of the substrate protein, thus completing the reaction cycle. Several rounds of ATP-dependent interactions between DnaJ, DnaK and GrpE are required for fully efficient folding. Also involved, together with DnaK and GrpE, in the DNA replication of plasmids through activation of initiation proteins.</text>
</comment>
<comment type="cofactor">
    <cofactor evidence="1">
        <name>Zn(2+)</name>
        <dbReference type="ChEBI" id="CHEBI:29105"/>
    </cofactor>
    <text evidence="1">Binds 2 Zn(2+) ions per monomer.</text>
</comment>
<comment type="subunit">
    <text evidence="1">Homodimer.</text>
</comment>
<comment type="subcellular location">
    <subcellularLocation>
        <location evidence="1">Cytoplasm</location>
    </subcellularLocation>
</comment>
<comment type="domain">
    <text evidence="1">The J domain is necessary and sufficient to stimulate DnaK ATPase activity. Zinc center 1 plays an important role in the autonomous, DnaK-independent chaperone activity of DnaJ. Zinc center 2 is essential for interaction with DnaK and for DnaJ activity.</text>
</comment>
<comment type="miscellaneous">
    <text>Was identified as a high-confidence drug target.</text>
</comment>
<comment type="similarity">
    <text evidence="1">Belongs to the DnaJ family.</text>
</comment>
<sequence length="395" mass="41345">MAQREWVEKDFYQELGVSSDASPEEIKRAYRKLARDLHPDANPGNPAAGERFKAVSEAHNVLSDPAKRKEYDETRRLFAGGGFGGRRFDSGFGGGFGGFGVGGDGAEFNLNDLFDAASRTGGTTIGDLFGGLFGRGGSARPSRPRRGNDLETETELDFVEAAKGVAMPLRLTSPAPCTNCHGSGARPGTSPKVCPTCNGSGVINRNQGAFGFSEPCTDCRGSGSIIEHPCEECKGTGVTTRTRTINVRIPPGVEDGQRIRLAGQGEAGLRGAPSGDLYVTVHVRPDKIFGRDGDDLTVTVPVSFTELALGSTLSVPTLDGTVGVRVPKGTADGRILRVRGRGVPKRSGGSGDLLVTVKVAVPPNLAGAAQEALEAYAAAERSSGFNPRAGWAGNR</sequence>
<reference key="1">
    <citation type="journal article" date="1988" name="Nucleic Acids Res.">
        <title>A gene from Mycobacterium tuberculosis which is homologous to the DnaJ heat shock protein of E. coli.</title>
        <authorList>
            <person name="Lathigra R."/>
        </authorList>
    </citation>
    <scope>NUCLEOTIDE SEQUENCE [GENOMIC DNA]</scope>
    <source>
        <strain>ATCC 35801 / TMC 107 / Erdman</strain>
    </source>
</reference>
<reference key="2">
    <citation type="submission" date="1991-02" db="EMBL/GenBank/DDBJ databases">
        <authorList>
            <person name="Lathigra R."/>
            <person name="Alexander B."/>
            <person name="Stover C.K."/>
            <person name="Coadwell J."/>
            <person name="Young R.A."/>
            <person name="Young D.B."/>
        </authorList>
    </citation>
    <scope>NUCLEOTIDE SEQUENCE [GENOMIC DNA]</scope>
    <source>
        <strain>ATCC 35801 / TMC 107 / Erdman</strain>
    </source>
</reference>
<reference key="3">
    <citation type="journal article" date="2007" name="Syst. Appl. Microbiol.">
        <title>Mycobacterium species identification - A new approach via dnaJ gene sequencing.</title>
        <authorList>
            <person name="Yamada-Noda M."/>
            <person name="Ohkusu K."/>
            <person name="Hata H."/>
            <person name="Shah M.M."/>
            <person name="Nhung P.H."/>
            <person name="Sun X.S."/>
            <person name="Hayashi M."/>
            <person name="Ezaki T."/>
        </authorList>
    </citation>
    <scope>NUCLEOTIDE SEQUENCE [GENOMIC DNA]</scope>
    <source>
        <strain>GTC 601</strain>
    </source>
</reference>
<reference key="4">
    <citation type="journal article" date="1998" name="Nature">
        <title>Deciphering the biology of Mycobacterium tuberculosis from the complete genome sequence.</title>
        <authorList>
            <person name="Cole S.T."/>
            <person name="Brosch R."/>
            <person name="Parkhill J."/>
            <person name="Garnier T."/>
            <person name="Churcher C.M."/>
            <person name="Harris D.E."/>
            <person name="Gordon S.V."/>
            <person name="Eiglmeier K."/>
            <person name="Gas S."/>
            <person name="Barry C.E. III"/>
            <person name="Tekaia F."/>
            <person name="Badcock K."/>
            <person name="Basham D."/>
            <person name="Brown D."/>
            <person name="Chillingworth T."/>
            <person name="Connor R."/>
            <person name="Davies R.M."/>
            <person name="Devlin K."/>
            <person name="Feltwell T."/>
            <person name="Gentles S."/>
            <person name="Hamlin N."/>
            <person name="Holroyd S."/>
            <person name="Hornsby T."/>
            <person name="Jagels K."/>
            <person name="Krogh A."/>
            <person name="McLean J."/>
            <person name="Moule S."/>
            <person name="Murphy L.D."/>
            <person name="Oliver S."/>
            <person name="Osborne J."/>
            <person name="Quail M.A."/>
            <person name="Rajandream M.A."/>
            <person name="Rogers J."/>
            <person name="Rutter S."/>
            <person name="Seeger K."/>
            <person name="Skelton S."/>
            <person name="Squares S."/>
            <person name="Squares R."/>
            <person name="Sulston J.E."/>
            <person name="Taylor K."/>
            <person name="Whitehead S."/>
            <person name="Barrell B.G."/>
        </authorList>
    </citation>
    <scope>NUCLEOTIDE SEQUENCE [LARGE SCALE GENOMIC DNA]</scope>
    <source>
        <strain>ATCC 25618 / H37Rv</strain>
    </source>
</reference>
<reference key="5">
    <citation type="journal article" date="2008" name="BMC Syst. Biol.">
        <title>targetTB: a target identification pipeline for Mycobacterium tuberculosis through an interactome, reactome and genome-scale structural analysis.</title>
        <authorList>
            <person name="Raman K."/>
            <person name="Yeturu K."/>
            <person name="Chandra N."/>
        </authorList>
    </citation>
    <scope>IDENTIFICATION AS A DRUG TARGET [LARGE SCALE ANALYSIS]</scope>
</reference>
<reference key="6">
    <citation type="journal article" date="2011" name="Mol. Cell. Proteomics">
        <title>Proteogenomic analysis of Mycobacterium tuberculosis by high resolution mass spectrometry.</title>
        <authorList>
            <person name="Kelkar D.S."/>
            <person name="Kumar D."/>
            <person name="Kumar P."/>
            <person name="Balakrishnan L."/>
            <person name="Muthusamy B."/>
            <person name="Yadav A.K."/>
            <person name="Shrivastava P."/>
            <person name="Marimuthu A."/>
            <person name="Anand S."/>
            <person name="Sundaram H."/>
            <person name="Kingsbury R."/>
            <person name="Harsha H.C."/>
            <person name="Nair B."/>
            <person name="Prasad T.S."/>
            <person name="Chauhan D.S."/>
            <person name="Katoch K."/>
            <person name="Katoch V.M."/>
            <person name="Kumar P."/>
            <person name="Chaerkady R."/>
            <person name="Ramachandran S."/>
            <person name="Dash D."/>
            <person name="Pandey A."/>
        </authorList>
    </citation>
    <scope>IDENTIFICATION BY MASS SPECTROMETRY [LARGE SCALE ANALYSIS]</scope>
    <source>
        <strain>ATCC 25618 / H37Rv</strain>
    </source>
</reference>